<reference key="1">
    <citation type="journal article" date="2003" name="Science">
        <title>Genome of Geobacter sulfurreducens: metal reduction in subsurface environments.</title>
        <authorList>
            <person name="Methe B.A."/>
            <person name="Nelson K.E."/>
            <person name="Eisen J.A."/>
            <person name="Paulsen I.T."/>
            <person name="Nelson W.C."/>
            <person name="Heidelberg J.F."/>
            <person name="Wu D."/>
            <person name="Wu M."/>
            <person name="Ward N.L."/>
            <person name="Beanan M.J."/>
            <person name="Dodson R.J."/>
            <person name="Madupu R."/>
            <person name="Brinkac L.M."/>
            <person name="Daugherty S.C."/>
            <person name="DeBoy R.T."/>
            <person name="Durkin A.S."/>
            <person name="Gwinn M.L."/>
            <person name="Kolonay J.F."/>
            <person name="Sullivan S.A."/>
            <person name="Haft D.H."/>
            <person name="Selengut J."/>
            <person name="Davidsen T.M."/>
            <person name="Zafar N."/>
            <person name="White O."/>
            <person name="Tran B."/>
            <person name="Romero C."/>
            <person name="Forberger H.A."/>
            <person name="Weidman J.F."/>
            <person name="Khouri H.M."/>
            <person name="Feldblyum T.V."/>
            <person name="Utterback T.R."/>
            <person name="Van Aken S.E."/>
            <person name="Lovley D.R."/>
            <person name="Fraser C.M."/>
        </authorList>
    </citation>
    <scope>NUCLEOTIDE SEQUENCE [LARGE SCALE GENOMIC DNA]</scope>
    <source>
        <strain>ATCC 51573 / DSM 12127 / PCA</strain>
    </source>
</reference>
<dbReference type="EC" id="2.7.1.23" evidence="1"/>
<dbReference type="EMBL" id="AE017180">
    <property type="protein sequence ID" value="AAR35441.1"/>
    <property type="molecule type" value="Genomic_DNA"/>
</dbReference>
<dbReference type="RefSeq" id="NP_953114.1">
    <property type="nucleotide sequence ID" value="NC_002939.5"/>
</dbReference>
<dbReference type="RefSeq" id="WP_010942707.1">
    <property type="nucleotide sequence ID" value="NC_002939.5"/>
</dbReference>
<dbReference type="SMR" id="Q74BH6"/>
<dbReference type="FunCoup" id="Q74BH6">
    <property type="interactions" value="537"/>
</dbReference>
<dbReference type="STRING" id="243231.GSU2065"/>
<dbReference type="EnsemblBacteria" id="AAR35441">
    <property type="protein sequence ID" value="AAR35441"/>
    <property type="gene ID" value="GSU2065"/>
</dbReference>
<dbReference type="KEGG" id="gsu:GSU2065"/>
<dbReference type="PATRIC" id="fig|243231.5.peg.2101"/>
<dbReference type="eggNOG" id="COG0061">
    <property type="taxonomic scope" value="Bacteria"/>
</dbReference>
<dbReference type="HOGENOM" id="CLU_008831_0_1_7"/>
<dbReference type="InParanoid" id="Q74BH6"/>
<dbReference type="OrthoDB" id="9774737at2"/>
<dbReference type="Proteomes" id="UP000000577">
    <property type="component" value="Chromosome"/>
</dbReference>
<dbReference type="GO" id="GO:0005737">
    <property type="term" value="C:cytoplasm"/>
    <property type="evidence" value="ECO:0007669"/>
    <property type="project" value="UniProtKB-SubCell"/>
</dbReference>
<dbReference type="GO" id="GO:0005524">
    <property type="term" value="F:ATP binding"/>
    <property type="evidence" value="ECO:0007669"/>
    <property type="project" value="UniProtKB-KW"/>
</dbReference>
<dbReference type="GO" id="GO:0046872">
    <property type="term" value="F:metal ion binding"/>
    <property type="evidence" value="ECO:0007669"/>
    <property type="project" value="UniProtKB-UniRule"/>
</dbReference>
<dbReference type="GO" id="GO:0051287">
    <property type="term" value="F:NAD binding"/>
    <property type="evidence" value="ECO:0007669"/>
    <property type="project" value="UniProtKB-ARBA"/>
</dbReference>
<dbReference type="GO" id="GO:0003951">
    <property type="term" value="F:NAD+ kinase activity"/>
    <property type="evidence" value="ECO:0000318"/>
    <property type="project" value="GO_Central"/>
</dbReference>
<dbReference type="GO" id="GO:0019674">
    <property type="term" value="P:NAD metabolic process"/>
    <property type="evidence" value="ECO:0007669"/>
    <property type="project" value="InterPro"/>
</dbReference>
<dbReference type="GO" id="GO:0006741">
    <property type="term" value="P:NADP biosynthetic process"/>
    <property type="evidence" value="ECO:0000318"/>
    <property type="project" value="GO_Central"/>
</dbReference>
<dbReference type="FunFam" id="2.60.200.30:FF:000009">
    <property type="entry name" value="Poly(P)/ATP NAD kinase"/>
    <property type="match status" value="1"/>
</dbReference>
<dbReference type="Gene3D" id="3.40.50.10330">
    <property type="entry name" value="Probable inorganic polyphosphate/atp-NAD kinase, domain 1"/>
    <property type="match status" value="1"/>
</dbReference>
<dbReference type="Gene3D" id="2.60.200.30">
    <property type="entry name" value="Probable inorganic polyphosphate/atp-NAD kinase, domain 2"/>
    <property type="match status" value="1"/>
</dbReference>
<dbReference type="HAMAP" id="MF_00361">
    <property type="entry name" value="NAD_kinase"/>
    <property type="match status" value="1"/>
</dbReference>
<dbReference type="InterPro" id="IPR017438">
    <property type="entry name" value="ATP-NAD_kinase_N"/>
</dbReference>
<dbReference type="InterPro" id="IPR017437">
    <property type="entry name" value="ATP-NAD_kinase_PpnK-typ_C"/>
</dbReference>
<dbReference type="InterPro" id="IPR016064">
    <property type="entry name" value="NAD/diacylglycerol_kinase_sf"/>
</dbReference>
<dbReference type="InterPro" id="IPR002504">
    <property type="entry name" value="NADK"/>
</dbReference>
<dbReference type="PANTHER" id="PTHR20275">
    <property type="entry name" value="NAD KINASE"/>
    <property type="match status" value="1"/>
</dbReference>
<dbReference type="PANTHER" id="PTHR20275:SF0">
    <property type="entry name" value="NAD KINASE"/>
    <property type="match status" value="1"/>
</dbReference>
<dbReference type="Pfam" id="PF01513">
    <property type="entry name" value="NAD_kinase"/>
    <property type="match status" value="1"/>
</dbReference>
<dbReference type="Pfam" id="PF20143">
    <property type="entry name" value="NAD_kinase_C"/>
    <property type="match status" value="1"/>
</dbReference>
<dbReference type="SUPFAM" id="SSF111331">
    <property type="entry name" value="NAD kinase/diacylglycerol kinase-like"/>
    <property type="match status" value="1"/>
</dbReference>
<name>NADK_GEOSL</name>
<evidence type="ECO:0000255" key="1">
    <source>
        <dbReference type="HAMAP-Rule" id="MF_00361"/>
    </source>
</evidence>
<keyword id="KW-0067">ATP-binding</keyword>
<keyword id="KW-0963">Cytoplasm</keyword>
<keyword id="KW-0418">Kinase</keyword>
<keyword id="KW-0520">NAD</keyword>
<keyword id="KW-0521">NADP</keyword>
<keyword id="KW-0547">Nucleotide-binding</keyword>
<keyword id="KW-1185">Reference proteome</keyword>
<keyword id="KW-0808">Transferase</keyword>
<organism>
    <name type="scientific">Geobacter sulfurreducens (strain ATCC 51573 / DSM 12127 / PCA)</name>
    <dbReference type="NCBI Taxonomy" id="243231"/>
    <lineage>
        <taxon>Bacteria</taxon>
        <taxon>Pseudomonadati</taxon>
        <taxon>Thermodesulfobacteriota</taxon>
        <taxon>Desulfuromonadia</taxon>
        <taxon>Geobacterales</taxon>
        <taxon>Geobacteraceae</taxon>
        <taxon>Geobacter</taxon>
    </lineage>
</organism>
<gene>
    <name evidence="1" type="primary">nadK</name>
    <name type="ordered locus">GSU2065</name>
</gene>
<protein>
    <recommendedName>
        <fullName evidence="1">NAD kinase</fullName>
        <ecNumber evidence="1">2.7.1.23</ecNumber>
    </recommendedName>
    <alternativeName>
        <fullName evidence="1">ATP-dependent NAD kinase</fullName>
    </alternativeName>
</protein>
<feature type="chain" id="PRO_0000229640" description="NAD kinase">
    <location>
        <begin position="1"/>
        <end position="284"/>
    </location>
</feature>
<feature type="active site" description="Proton acceptor" evidence="1">
    <location>
        <position position="67"/>
    </location>
</feature>
<feature type="binding site" evidence="1">
    <location>
        <begin position="67"/>
        <end position="68"/>
    </location>
    <ligand>
        <name>NAD(+)</name>
        <dbReference type="ChEBI" id="CHEBI:57540"/>
    </ligand>
</feature>
<feature type="binding site" evidence="1">
    <location>
        <begin position="141"/>
        <end position="142"/>
    </location>
    <ligand>
        <name>NAD(+)</name>
        <dbReference type="ChEBI" id="CHEBI:57540"/>
    </ligand>
</feature>
<feature type="binding site" evidence="1">
    <location>
        <position position="152"/>
    </location>
    <ligand>
        <name>NAD(+)</name>
        <dbReference type="ChEBI" id="CHEBI:57540"/>
    </ligand>
</feature>
<feature type="binding site" evidence="1">
    <location>
        <position position="169"/>
    </location>
    <ligand>
        <name>NAD(+)</name>
        <dbReference type="ChEBI" id="CHEBI:57540"/>
    </ligand>
</feature>
<feature type="binding site" evidence="1">
    <location>
        <position position="171"/>
    </location>
    <ligand>
        <name>NAD(+)</name>
        <dbReference type="ChEBI" id="CHEBI:57540"/>
    </ligand>
</feature>
<feature type="binding site" evidence="1">
    <location>
        <begin position="182"/>
        <end position="187"/>
    </location>
    <ligand>
        <name>NAD(+)</name>
        <dbReference type="ChEBI" id="CHEBI:57540"/>
    </ligand>
</feature>
<feature type="binding site" evidence="1">
    <location>
        <position position="241"/>
    </location>
    <ligand>
        <name>NAD(+)</name>
        <dbReference type="ChEBI" id="CHEBI:57540"/>
    </ligand>
</feature>
<sequence length="284" mass="30999">MKKIAIFAKVHDPRCQGVASELIAWLEARGLIPLVEAHLARHLGGRQGIVPEDIPVLADMAVVLGGDGTLISAARLIGSRQIPILGVNLGSLGFLTEITLDELYPVLESCLSGDFQVTERMMLTVSVERNGEEICSHRVLNDVVINKGALARIIDMETEVSGIRLTTYKADGLIISTPTGSTGYSLSANGPIVHPSLECITITPICPHTLTNRPIVLESSSGVTVWLRSKDEDVYLTLDGQVGMELKCGDAVHVRRAAHRTRLVMSRSRNYFEVLRTKLKWGER</sequence>
<proteinExistence type="inferred from homology"/>
<accession>Q74BH6</accession>
<comment type="function">
    <text evidence="1">Involved in the regulation of the intracellular balance of NAD and NADP, and is a key enzyme in the biosynthesis of NADP. Catalyzes specifically the phosphorylation on 2'-hydroxyl of the adenosine moiety of NAD to yield NADP.</text>
</comment>
<comment type="catalytic activity">
    <reaction evidence="1">
        <text>NAD(+) + ATP = ADP + NADP(+) + H(+)</text>
        <dbReference type="Rhea" id="RHEA:18629"/>
        <dbReference type="ChEBI" id="CHEBI:15378"/>
        <dbReference type="ChEBI" id="CHEBI:30616"/>
        <dbReference type="ChEBI" id="CHEBI:57540"/>
        <dbReference type="ChEBI" id="CHEBI:58349"/>
        <dbReference type="ChEBI" id="CHEBI:456216"/>
        <dbReference type="EC" id="2.7.1.23"/>
    </reaction>
</comment>
<comment type="cofactor">
    <cofactor evidence="1">
        <name>a divalent metal cation</name>
        <dbReference type="ChEBI" id="CHEBI:60240"/>
    </cofactor>
</comment>
<comment type="subcellular location">
    <subcellularLocation>
        <location evidence="1">Cytoplasm</location>
    </subcellularLocation>
</comment>
<comment type="similarity">
    <text evidence="1">Belongs to the NAD kinase family.</text>
</comment>